<proteinExistence type="inferred from homology"/>
<feature type="chain" id="PRO_0000229564" description="Small ribosomal subunit protein bS6">
    <location>
        <begin position="1"/>
        <end position="113"/>
    </location>
</feature>
<keyword id="KW-1185">Reference proteome</keyword>
<keyword id="KW-0687">Ribonucleoprotein</keyword>
<keyword id="KW-0689">Ribosomal protein</keyword>
<keyword id="KW-0694">RNA-binding</keyword>
<keyword id="KW-0699">rRNA-binding</keyword>
<sequence>MRHYEIVFMVHPDQSEQVTGMIERYTGSITEAGGVIHRLEDWGRRQLAYPINKLHKAHYVLMNVEAPTEVISELETTFRYNDAVLRNLVMRTKNAVTEASPLVREEKKEAPAA</sequence>
<comment type="function">
    <text evidence="1">Binds together with bS18 to 16S ribosomal RNA.</text>
</comment>
<comment type="similarity">
    <text evidence="1">Belongs to the bacterial ribosomal protein bS6 family.</text>
</comment>
<evidence type="ECO:0000255" key="1">
    <source>
        <dbReference type="HAMAP-Rule" id="MF_00360"/>
    </source>
</evidence>
<evidence type="ECO:0000305" key="2"/>
<name>RS6_PSET1</name>
<gene>
    <name evidence="1" type="primary">rpsF</name>
    <name type="ordered locus">PSHAa2443</name>
</gene>
<protein>
    <recommendedName>
        <fullName evidence="1">Small ribosomal subunit protein bS6</fullName>
    </recommendedName>
    <alternativeName>
        <fullName evidence="2">30S ribosomal protein S6</fullName>
    </alternativeName>
</protein>
<organism>
    <name type="scientific">Pseudoalteromonas translucida (strain TAC 125)</name>
    <dbReference type="NCBI Taxonomy" id="326442"/>
    <lineage>
        <taxon>Bacteria</taxon>
        <taxon>Pseudomonadati</taxon>
        <taxon>Pseudomonadota</taxon>
        <taxon>Gammaproteobacteria</taxon>
        <taxon>Alteromonadales</taxon>
        <taxon>Pseudoalteromonadaceae</taxon>
        <taxon>Pseudoalteromonas</taxon>
    </lineage>
</organism>
<dbReference type="EMBL" id="CR954246">
    <property type="protein sequence ID" value="CAI87492.1"/>
    <property type="molecule type" value="Genomic_DNA"/>
</dbReference>
<dbReference type="SMR" id="Q3IIA2"/>
<dbReference type="STRING" id="326442.PSHAa2443"/>
<dbReference type="KEGG" id="pha:PSHAa2443"/>
<dbReference type="eggNOG" id="COG0360">
    <property type="taxonomic scope" value="Bacteria"/>
</dbReference>
<dbReference type="HOGENOM" id="CLU_113441_6_1_6"/>
<dbReference type="BioCyc" id="PHAL326442:PSHA_RS12040-MONOMER"/>
<dbReference type="Proteomes" id="UP000006843">
    <property type="component" value="Chromosome I"/>
</dbReference>
<dbReference type="GO" id="GO:0022627">
    <property type="term" value="C:cytosolic small ribosomal subunit"/>
    <property type="evidence" value="ECO:0007669"/>
    <property type="project" value="TreeGrafter"/>
</dbReference>
<dbReference type="GO" id="GO:0070181">
    <property type="term" value="F:small ribosomal subunit rRNA binding"/>
    <property type="evidence" value="ECO:0007669"/>
    <property type="project" value="TreeGrafter"/>
</dbReference>
<dbReference type="GO" id="GO:0003735">
    <property type="term" value="F:structural constituent of ribosome"/>
    <property type="evidence" value="ECO:0007669"/>
    <property type="project" value="InterPro"/>
</dbReference>
<dbReference type="GO" id="GO:0006412">
    <property type="term" value="P:translation"/>
    <property type="evidence" value="ECO:0007669"/>
    <property type="project" value="UniProtKB-UniRule"/>
</dbReference>
<dbReference type="CDD" id="cd00473">
    <property type="entry name" value="bS6"/>
    <property type="match status" value="1"/>
</dbReference>
<dbReference type="FunFam" id="3.30.70.60:FF:000003">
    <property type="entry name" value="30S ribosomal protein S6"/>
    <property type="match status" value="1"/>
</dbReference>
<dbReference type="Gene3D" id="3.30.70.60">
    <property type="match status" value="1"/>
</dbReference>
<dbReference type="HAMAP" id="MF_00360">
    <property type="entry name" value="Ribosomal_bS6"/>
    <property type="match status" value="1"/>
</dbReference>
<dbReference type="InterPro" id="IPR000529">
    <property type="entry name" value="Ribosomal_bS6"/>
</dbReference>
<dbReference type="InterPro" id="IPR020815">
    <property type="entry name" value="Ribosomal_bS6_CS"/>
</dbReference>
<dbReference type="InterPro" id="IPR035980">
    <property type="entry name" value="Ribosomal_bS6_sf"/>
</dbReference>
<dbReference type="InterPro" id="IPR020814">
    <property type="entry name" value="Ribosomal_S6_plastid/chlpt"/>
</dbReference>
<dbReference type="InterPro" id="IPR014717">
    <property type="entry name" value="Transl_elong_EF1B/ribsomal_bS6"/>
</dbReference>
<dbReference type="NCBIfam" id="TIGR00166">
    <property type="entry name" value="S6"/>
    <property type="match status" value="1"/>
</dbReference>
<dbReference type="PANTHER" id="PTHR21011">
    <property type="entry name" value="MITOCHONDRIAL 28S RIBOSOMAL PROTEIN S6"/>
    <property type="match status" value="1"/>
</dbReference>
<dbReference type="PANTHER" id="PTHR21011:SF1">
    <property type="entry name" value="SMALL RIBOSOMAL SUBUNIT PROTEIN BS6M"/>
    <property type="match status" value="1"/>
</dbReference>
<dbReference type="Pfam" id="PF01250">
    <property type="entry name" value="Ribosomal_S6"/>
    <property type="match status" value="1"/>
</dbReference>
<dbReference type="SUPFAM" id="SSF54995">
    <property type="entry name" value="Ribosomal protein S6"/>
    <property type="match status" value="1"/>
</dbReference>
<dbReference type="PROSITE" id="PS01048">
    <property type="entry name" value="RIBOSOMAL_S6"/>
    <property type="match status" value="1"/>
</dbReference>
<accession>Q3IIA2</accession>
<reference key="1">
    <citation type="journal article" date="2005" name="Genome Res.">
        <title>Coping with cold: the genome of the versatile marine Antarctica bacterium Pseudoalteromonas haloplanktis TAC125.</title>
        <authorList>
            <person name="Medigue C."/>
            <person name="Krin E."/>
            <person name="Pascal G."/>
            <person name="Barbe V."/>
            <person name="Bernsel A."/>
            <person name="Bertin P.N."/>
            <person name="Cheung F."/>
            <person name="Cruveiller S."/>
            <person name="D'Amico S."/>
            <person name="Duilio A."/>
            <person name="Fang G."/>
            <person name="Feller G."/>
            <person name="Ho C."/>
            <person name="Mangenot S."/>
            <person name="Marino G."/>
            <person name="Nilsson J."/>
            <person name="Parrilli E."/>
            <person name="Rocha E.P.C."/>
            <person name="Rouy Z."/>
            <person name="Sekowska A."/>
            <person name="Tutino M.L."/>
            <person name="Vallenet D."/>
            <person name="von Heijne G."/>
            <person name="Danchin A."/>
        </authorList>
    </citation>
    <scope>NUCLEOTIDE SEQUENCE [LARGE SCALE GENOMIC DNA]</scope>
    <source>
        <strain>TAC 125</strain>
    </source>
</reference>